<reference key="1">
    <citation type="journal article" date="2007" name="PLoS Genet.">
        <title>Patterns and implications of gene gain and loss in the evolution of Prochlorococcus.</title>
        <authorList>
            <person name="Kettler G.C."/>
            <person name="Martiny A.C."/>
            <person name="Huang K."/>
            <person name="Zucker J."/>
            <person name="Coleman M.L."/>
            <person name="Rodrigue S."/>
            <person name="Chen F."/>
            <person name="Lapidus A."/>
            <person name="Ferriera S."/>
            <person name="Johnson J."/>
            <person name="Steglich C."/>
            <person name="Church G.M."/>
            <person name="Richardson P."/>
            <person name="Chisholm S.W."/>
        </authorList>
    </citation>
    <scope>NUCLEOTIDE SEQUENCE [LARGE SCALE GENOMIC DNA]</scope>
    <source>
        <strain>MIT 9215</strain>
    </source>
</reference>
<name>ATPB_PROM2</name>
<gene>
    <name evidence="1" type="primary">atpD</name>
    <name evidence="1" type="synonym">atpB</name>
    <name type="ordered locus">P9215_17061</name>
</gene>
<proteinExistence type="inferred from homology"/>
<comment type="function">
    <text evidence="1">Produces ATP from ADP in the presence of a proton gradient across the membrane. The catalytic sites are hosted primarily by the beta subunits.</text>
</comment>
<comment type="catalytic activity">
    <reaction evidence="1">
        <text>ATP + H2O + 4 H(+)(in) = ADP + phosphate + 5 H(+)(out)</text>
        <dbReference type="Rhea" id="RHEA:57720"/>
        <dbReference type="ChEBI" id="CHEBI:15377"/>
        <dbReference type="ChEBI" id="CHEBI:15378"/>
        <dbReference type="ChEBI" id="CHEBI:30616"/>
        <dbReference type="ChEBI" id="CHEBI:43474"/>
        <dbReference type="ChEBI" id="CHEBI:456216"/>
        <dbReference type="EC" id="7.1.2.2"/>
    </reaction>
</comment>
<comment type="subunit">
    <text evidence="1">F-type ATPases have 2 components, CF(1) - the catalytic core - and CF(0) - the membrane proton channel. CF(1) has five subunits: alpha(3), beta(3), gamma(1), delta(1), epsilon(1). CF(0) has four main subunits: a(1), b(1), b'(1) and c(9-12).</text>
</comment>
<comment type="subcellular location">
    <subcellularLocation>
        <location evidence="1">Cellular thylakoid membrane</location>
        <topology evidence="1">Peripheral membrane protein</topology>
    </subcellularLocation>
</comment>
<comment type="similarity">
    <text evidence="1">Belongs to the ATPase alpha/beta chains family.</text>
</comment>
<feature type="chain" id="PRO_1000067727" description="ATP synthase subunit beta">
    <location>
        <begin position="1"/>
        <end position="486"/>
    </location>
</feature>
<feature type="binding site" evidence="1">
    <location>
        <begin position="164"/>
        <end position="171"/>
    </location>
    <ligand>
        <name>ATP</name>
        <dbReference type="ChEBI" id="CHEBI:30616"/>
    </ligand>
</feature>
<keyword id="KW-0066">ATP synthesis</keyword>
<keyword id="KW-0067">ATP-binding</keyword>
<keyword id="KW-0139">CF(1)</keyword>
<keyword id="KW-0375">Hydrogen ion transport</keyword>
<keyword id="KW-0406">Ion transport</keyword>
<keyword id="KW-0472">Membrane</keyword>
<keyword id="KW-0547">Nucleotide-binding</keyword>
<keyword id="KW-0793">Thylakoid</keyword>
<keyword id="KW-1278">Translocase</keyword>
<keyword id="KW-0813">Transport</keyword>
<evidence type="ECO:0000255" key="1">
    <source>
        <dbReference type="HAMAP-Rule" id="MF_01347"/>
    </source>
</evidence>
<sequence length="486" mass="52156">MVATPSTSSQTKGVVRQVIGPVLDVEFPAGKLPKILNALRIEAKNPAGQDIALTAEVQQLLGDHRVRAVAMSGTDGLVRGMEAIDTGAPISVPVGEATLGRIFNVLGEPVDEQGPVNTKDTAPIHRAAPKLTDLETKPKVFETGIKVIDLLAPYRQGGKVGLFGGAGVGKTVLIQELINNIAKEHGGVSVFGGVGERTREGNDLYEEFKESGVINADDLTQSKVALCFGQMNEPPGARMRVGLSALTMAEHFRDVNKQDVLLFVDNIFRFVQAGSEVSALLGRMPSAVGYQPTLGTDVGELQERITSTLEGSITSIQAVYVPADDLTDPAPATTFAHLDATTVLARALAAKGIYPAVDPLDSTSTMLQPSVVGDEHYKTARAVQSTLQRYKELQDIIAILGLDELSEEDRLTVDRARKIEKFLSQPFFVAEIFTGMSGKYVKLEDTIAGFNMILSGELDDLPEQAFYLVGNIDEVKAKAEKINSEK</sequence>
<accession>A8G6T8</accession>
<protein>
    <recommendedName>
        <fullName evidence="1">ATP synthase subunit beta</fullName>
        <ecNumber evidence="1">7.1.2.2</ecNumber>
    </recommendedName>
    <alternativeName>
        <fullName evidence="1">ATP synthase F1 sector subunit beta</fullName>
    </alternativeName>
    <alternativeName>
        <fullName evidence="1">F-ATPase subunit beta</fullName>
    </alternativeName>
</protein>
<organism>
    <name type="scientific">Prochlorococcus marinus (strain MIT 9215)</name>
    <dbReference type="NCBI Taxonomy" id="93060"/>
    <lineage>
        <taxon>Bacteria</taxon>
        <taxon>Bacillati</taxon>
        <taxon>Cyanobacteriota</taxon>
        <taxon>Cyanophyceae</taxon>
        <taxon>Synechococcales</taxon>
        <taxon>Prochlorococcaceae</taxon>
        <taxon>Prochlorococcus</taxon>
    </lineage>
</organism>
<dbReference type="EC" id="7.1.2.2" evidence="1"/>
<dbReference type="EMBL" id="CP000825">
    <property type="protein sequence ID" value="ABV51319.1"/>
    <property type="molecule type" value="Genomic_DNA"/>
</dbReference>
<dbReference type="RefSeq" id="WP_002805391.1">
    <property type="nucleotide sequence ID" value="NC_009840.1"/>
</dbReference>
<dbReference type="SMR" id="A8G6T8"/>
<dbReference type="STRING" id="93060.P9215_17061"/>
<dbReference type="KEGG" id="pmh:P9215_17061"/>
<dbReference type="eggNOG" id="COG0055">
    <property type="taxonomic scope" value="Bacteria"/>
</dbReference>
<dbReference type="HOGENOM" id="CLU_022398_0_2_3"/>
<dbReference type="OrthoDB" id="9801639at2"/>
<dbReference type="Proteomes" id="UP000002014">
    <property type="component" value="Chromosome"/>
</dbReference>
<dbReference type="GO" id="GO:0031676">
    <property type="term" value="C:plasma membrane-derived thylakoid membrane"/>
    <property type="evidence" value="ECO:0007669"/>
    <property type="project" value="UniProtKB-SubCell"/>
</dbReference>
<dbReference type="GO" id="GO:0045259">
    <property type="term" value="C:proton-transporting ATP synthase complex"/>
    <property type="evidence" value="ECO:0007669"/>
    <property type="project" value="UniProtKB-KW"/>
</dbReference>
<dbReference type="GO" id="GO:0005524">
    <property type="term" value="F:ATP binding"/>
    <property type="evidence" value="ECO:0007669"/>
    <property type="project" value="UniProtKB-UniRule"/>
</dbReference>
<dbReference type="GO" id="GO:0016887">
    <property type="term" value="F:ATP hydrolysis activity"/>
    <property type="evidence" value="ECO:0007669"/>
    <property type="project" value="InterPro"/>
</dbReference>
<dbReference type="GO" id="GO:0046933">
    <property type="term" value="F:proton-transporting ATP synthase activity, rotational mechanism"/>
    <property type="evidence" value="ECO:0007669"/>
    <property type="project" value="UniProtKB-UniRule"/>
</dbReference>
<dbReference type="CDD" id="cd18110">
    <property type="entry name" value="ATP-synt_F1_beta_C"/>
    <property type="match status" value="1"/>
</dbReference>
<dbReference type="CDD" id="cd18115">
    <property type="entry name" value="ATP-synt_F1_beta_N"/>
    <property type="match status" value="1"/>
</dbReference>
<dbReference type="CDD" id="cd01133">
    <property type="entry name" value="F1-ATPase_beta_CD"/>
    <property type="match status" value="1"/>
</dbReference>
<dbReference type="FunFam" id="1.10.1140.10:FF:000001">
    <property type="entry name" value="ATP synthase subunit beta"/>
    <property type="match status" value="1"/>
</dbReference>
<dbReference type="FunFam" id="3.40.50.12240:FF:000006">
    <property type="entry name" value="ATP synthase subunit beta"/>
    <property type="match status" value="1"/>
</dbReference>
<dbReference type="FunFam" id="3.40.50.300:FF:000004">
    <property type="entry name" value="ATP synthase subunit beta"/>
    <property type="match status" value="1"/>
</dbReference>
<dbReference type="FunFam" id="2.40.10.170:FF:000002">
    <property type="entry name" value="ATP synthase subunit beta, chloroplastic"/>
    <property type="match status" value="1"/>
</dbReference>
<dbReference type="Gene3D" id="2.40.10.170">
    <property type="match status" value="1"/>
</dbReference>
<dbReference type="Gene3D" id="1.10.1140.10">
    <property type="entry name" value="Bovine Mitochondrial F1-atpase, Atp Synthase Beta Chain, Chain D, domain 3"/>
    <property type="match status" value="1"/>
</dbReference>
<dbReference type="Gene3D" id="3.40.50.300">
    <property type="entry name" value="P-loop containing nucleotide triphosphate hydrolases"/>
    <property type="match status" value="1"/>
</dbReference>
<dbReference type="HAMAP" id="MF_01347">
    <property type="entry name" value="ATP_synth_beta_bact"/>
    <property type="match status" value="1"/>
</dbReference>
<dbReference type="InterPro" id="IPR003593">
    <property type="entry name" value="AAA+_ATPase"/>
</dbReference>
<dbReference type="InterPro" id="IPR055190">
    <property type="entry name" value="ATP-synt_VA_C"/>
</dbReference>
<dbReference type="InterPro" id="IPR005722">
    <property type="entry name" value="ATP_synth_F1_bsu"/>
</dbReference>
<dbReference type="InterPro" id="IPR020003">
    <property type="entry name" value="ATPase_a/bsu_AS"/>
</dbReference>
<dbReference type="InterPro" id="IPR050053">
    <property type="entry name" value="ATPase_alpha/beta_chains"/>
</dbReference>
<dbReference type="InterPro" id="IPR004100">
    <property type="entry name" value="ATPase_F1/V1/A1_a/bsu_N"/>
</dbReference>
<dbReference type="InterPro" id="IPR036121">
    <property type="entry name" value="ATPase_F1/V1/A1_a/bsu_N_sf"/>
</dbReference>
<dbReference type="InterPro" id="IPR000194">
    <property type="entry name" value="ATPase_F1/V1/A1_a/bsu_nucl-bd"/>
</dbReference>
<dbReference type="InterPro" id="IPR024034">
    <property type="entry name" value="ATPase_F1/V1_b/a_C"/>
</dbReference>
<dbReference type="InterPro" id="IPR027417">
    <property type="entry name" value="P-loop_NTPase"/>
</dbReference>
<dbReference type="NCBIfam" id="TIGR01039">
    <property type="entry name" value="atpD"/>
    <property type="match status" value="1"/>
</dbReference>
<dbReference type="PANTHER" id="PTHR15184">
    <property type="entry name" value="ATP SYNTHASE"/>
    <property type="match status" value="1"/>
</dbReference>
<dbReference type="PANTHER" id="PTHR15184:SF71">
    <property type="entry name" value="ATP SYNTHASE SUBUNIT BETA, MITOCHONDRIAL"/>
    <property type="match status" value="1"/>
</dbReference>
<dbReference type="Pfam" id="PF00006">
    <property type="entry name" value="ATP-synt_ab"/>
    <property type="match status" value="1"/>
</dbReference>
<dbReference type="Pfam" id="PF02874">
    <property type="entry name" value="ATP-synt_ab_N"/>
    <property type="match status" value="1"/>
</dbReference>
<dbReference type="Pfam" id="PF22919">
    <property type="entry name" value="ATP-synt_VA_C"/>
    <property type="match status" value="1"/>
</dbReference>
<dbReference type="SMART" id="SM00382">
    <property type="entry name" value="AAA"/>
    <property type="match status" value="1"/>
</dbReference>
<dbReference type="SUPFAM" id="SSF47917">
    <property type="entry name" value="C-terminal domain of alpha and beta subunits of F1 ATP synthase"/>
    <property type="match status" value="1"/>
</dbReference>
<dbReference type="SUPFAM" id="SSF50615">
    <property type="entry name" value="N-terminal domain of alpha and beta subunits of F1 ATP synthase"/>
    <property type="match status" value="1"/>
</dbReference>
<dbReference type="SUPFAM" id="SSF52540">
    <property type="entry name" value="P-loop containing nucleoside triphosphate hydrolases"/>
    <property type="match status" value="1"/>
</dbReference>
<dbReference type="PROSITE" id="PS00152">
    <property type="entry name" value="ATPASE_ALPHA_BETA"/>
    <property type="match status" value="1"/>
</dbReference>